<name>MAST1_PROEX</name>
<reference key="1">
    <citation type="journal article" date="2005" name="Toxicon">
        <title>Structural and biological characterization of three novel mastoparan peptides from the venom of the neotropical social wasp Protopolybia exigua (Saussure).</title>
        <authorList>
            <person name="Mendes M.A."/>
            <person name="de Souza B.M."/>
            <person name="Palma M.S."/>
        </authorList>
    </citation>
    <scope>PROTEIN SEQUENCE</scope>
    <scope>FUNCTION</scope>
    <scope>SYNTHESIS</scope>
    <scope>MASS SPECTROMETRY</scope>
    <scope>SUBCELLULAR LOCATION</scope>
    <scope>AMIDATION AT LEU-14</scope>
    <source>
        <tissue>Venom</tissue>
    </source>
</reference>
<comment type="function">
    <text evidence="1 2 3">Mast cell degranulating peptide. Has hemolytic activity (PubMed:15581688). Its mast cell degranulation activity may be related to the activation of G-protein coupled receptors in mast cells as well as interaction with other proteins located in cell endosomal membranes in the mast cells (By similarity).</text>
</comment>
<comment type="subcellular location">
    <subcellularLocation>
        <location evidence="3">Secreted</location>
    </subcellularLocation>
    <subcellularLocation>
        <location evidence="6">Target cell membrane</location>
    </subcellularLocation>
    <text evidence="6">Assumes an amphipathic alpha-helical conformation in a membrane-like environment.</text>
</comment>
<comment type="tissue specificity">
    <text evidence="6">Expressed by the venom gland.</text>
</comment>
<comment type="mass spectrometry" mass="1581.02" method="Electrospray" evidence="3"/>
<comment type="similarity">
    <text evidence="5">Belongs to the MCD family. Mastoparan subfamily.</text>
</comment>
<dbReference type="GO" id="GO:0005576">
    <property type="term" value="C:extracellular region"/>
    <property type="evidence" value="ECO:0007669"/>
    <property type="project" value="UniProtKB-SubCell"/>
</dbReference>
<dbReference type="GO" id="GO:0016020">
    <property type="term" value="C:membrane"/>
    <property type="evidence" value="ECO:0007669"/>
    <property type="project" value="UniProtKB-KW"/>
</dbReference>
<dbReference type="GO" id="GO:0044218">
    <property type="term" value="C:other organism cell membrane"/>
    <property type="evidence" value="ECO:0007669"/>
    <property type="project" value="UniProtKB-KW"/>
</dbReference>
<dbReference type="GO" id="GO:0090729">
    <property type="term" value="F:toxin activity"/>
    <property type="evidence" value="ECO:0007669"/>
    <property type="project" value="UniProtKB-KW"/>
</dbReference>
<dbReference type="InterPro" id="IPR013214">
    <property type="entry name" value="Mastoparan_peptide"/>
</dbReference>
<dbReference type="Pfam" id="PF08251">
    <property type="entry name" value="Mastoparan_2"/>
    <property type="match status" value="1"/>
</dbReference>
<feature type="peptide" id="PRO_0000044055" description="Protopolybia-mastoparan-I" evidence="3">
    <location>
        <begin position="1"/>
        <end position="14"/>
    </location>
</feature>
<feature type="modified residue" description="Leucine amide" evidence="3">
    <location>
        <position position="14"/>
    </location>
</feature>
<sequence length="14" mass="1583">INWLKLGKKVSAIL</sequence>
<keyword id="KW-0027">Amidation</keyword>
<keyword id="KW-0903">Direct protein sequencing</keyword>
<keyword id="KW-1213">G-protein coupled receptor impairing toxin</keyword>
<keyword id="KW-0467">Mast cell degranulation</keyword>
<keyword id="KW-0472">Membrane</keyword>
<keyword id="KW-0964">Secreted</keyword>
<keyword id="KW-1052">Target cell membrane</keyword>
<keyword id="KW-1053">Target membrane</keyword>
<keyword id="KW-0800">Toxin</keyword>
<accession>P69034</accession>
<proteinExistence type="evidence at protein level"/>
<evidence type="ECO:0000250" key="1">
    <source>
        <dbReference type="UniProtKB" id="P01514"/>
    </source>
</evidence>
<evidence type="ECO:0000250" key="2">
    <source>
        <dbReference type="UniProtKB" id="P84914"/>
    </source>
</evidence>
<evidence type="ECO:0000269" key="3">
    <source>
    </source>
</evidence>
<evidence type="ECO:0000303" key="4">
    <source>
    </source>
</evidence>
<evidence type="ECO:0000305" key="5"/>
<evidence type="ECO:0000305" key="6">
    <source>
    </source>
</evidence>
<protein>
    <recommendedName>
        <fullName evidence="4">Protopolybia-mastoparan-I</fullName>
        <shortName evidence="5">Protopolybia-MP-I</shortName>
        <shortName evidence="4">Protopolybia-MPI</shortName>
    </recommendedName>
</protein>
<organism>
    <name type="scientific">Protopolybia exigua</name>
    <name type="common">Neotropical social wasp</name>
    <dbReference type="NCBI Taxonomy" id="91439"/>
    <lineage>
        <taxon>Eukaryota</taxon>
        <taxon>Metazoa</taxon>
        <taxon>Ecdysozoa</taxon>
        <taxon>Arthropoda</taxon>
        <taxon>Hexapoda</taxon>
        <taxon>Insecta</taxon>
        <taxon>Pterygota</taxon>
        <taxon>Neoptera</taxon>
        <taxon>Endopterygota</taxon>
        <taxon>Hymenoptera</taxon>
        <taxon>Apocrita</taxon>
        <taxon>Aculeata</taxon>
        <taxon>Vespoidea</taxon>
        <taxon>Vespidae</taxon>
        <taxon>Polistinae</taxon>
        <taxon>Epiponini</taxon>
        <taxon>Protopolybia</taxon>
    </lineage>
</organism>